<gene>
    <name evidence="1" type="primary">adk</name>
    <name type="ordered locus">SPH_0344</name>
</gene>
<keyword id="KW-0067">ATP-binding</keyword>
<keyword id="KW-0963">Cytoplasm</keyword>
<keyword id="KW-0418">Kinase</keyword>
<keyword id="KW-0545">Nucleotide biosynthesis</keyword>
<keyword id="KW-0547">Nucleotide-binding</keyword>
<keyword id="KW-0808">Transferase</keyword>
<feature type="chain" id="PRO_1000100614" description="Adenylate kinase">
    <location>
        <begin position="1"/>
        <end position="212"/>
    </location>
</feature>
<feature type="region of interest" description="NMP" evidence="1">
    <location>
        <begin position="30"/>
        <end position="59"/>
    </location>
</feature>
<feature type="region of interest" description="LID" evidence="1">
    <location>
        <begin position="127"/>
        <end position="159"/>
    </location>
</feature>
<feature type="binding site" evidence="1">
    <location>
        <begin position="10"/>
        <end position="15"/>
    </location>
    <ligand>
        <name>ATP</name>
        <dbReference type="ChEBI" id="CHEBI:30616"/>
    </ligand>
</feature>
<feature type="binding site" evidence="1">
    <location>
        <position position="31"/>
    </location>
    <ligand>
        <name>AMP</name>
        <dbReference type="ChEBI" id="CHEBI:456215"/>
    </ligand>
</feature>
<feature type="binding site" evidence="1">
    <location>
        <position position="36"/>
    </location>
    <ligand>
        <name>AMP</name>
        <dbReference type="ChEBI" id="CHEBI:456215"/>
    </ligand>
</feature>
<feature type="binding site" evidence="1">
    <location>
        <begin position="57"/>
        <end position="59"/>
    </location>
    <ligand>
        <name>AMP</name>
        <dbReference type="ChEBI" id="CHEBI:456215"/>
    </ligand>
</feature>
<feature type="binding site" evidence="1">
    <location>
        <begin position="86"/>
        <end position="89"/>
    </location>
    <ligand>
        <name>AMP</name>
        <dbReference type="ChEBI" id="CHEBI:456215"/>
    </ligand>
</feature>
<feature type="binding site" evidence="1">
    <location>
        <position position="93"/>
    </location>
    <ligand>
        <name>AMP</name>
        <dbReference type="ChEBI" id="CHEBI:456215"/>
    </ligand>
</feature>
<feature type="binding site" evidence="1">
    <location>
        <position position="128"/>
    </location>
    <ligand>
        <name>ATP</name>
        <dbReference type="ChEBI" id="CHEBI:30616"/>
    </ligand>
</feature>
<feature type="binding site" evidence="1">
    <location>
        <begin position="137"/>
        <end position="138"/>
    </location>
    <ligand>
        <name>ATP</name>
        <dbReference type="ChEBI" id="CHEBI:30616"/>
    </ligand>
</feature>
<feature type="binding site" evidence="1">
    <location>
        <position position="156"/>
    </location>
    <ligand>
        <name>AMP</name>
        <dbReference type="ChEBI" id="CHEBI:456215"/>
    </ligand>
</feature>
<feature type="binding site" evidence="1">
    <location>
        <position position="167"/>
    </location>
    <ligand>
        <name>AMP</name>
        <dbReference type="ChEBI" id="CHEBI:456215"/>
    </ligand>
</feature>
<feature type="binding site" evidence="1">
    <location>
        <position position="195"/>
    </location>
    <ligand>
        <name>ATP</name>
        <dbReference type="ChEBI" id="CHEBI:30616"/>
    </ligand>
</feature>
<accession>B1I8L9</accession>
<protein>
    <recommendedName>
        <fullName evidence="1">Adenylate kinase</fullName>
        <shortName evidence="1">AK</shortName>
        <ecNumber evidence="1">2.7.4.3</ecNumber>
    </recommendedName>
    <alternativeName>
        <fullName evidence="1">ATP-AMP transphosphorylase</fullName>
    </alternativeName>
    <alternativeName>
        <fullName evidence="1">ATP:AMP phosphotransferase</fullName>
    </alternativeName>
    <alternativeName>
        <fullName evidence="1">Adenylate monophosphate kinase</fullName>
    </alternativeName>
</protein>
<evidence type="ECO:0000255" key="1">
    <source>
        <dbReference type="HAMAP-Rule" id="MF_00235"/>
    </source>
</evidence>
<comment type="function">
    <text evidence="1">Catalyzes the reversible transfer of the terminal phosphate group between ATP and AMP. Plays an important role in cellular energy homeostasis and in adenine nucleotide metabolism.</text>
</comment>
<comment type="catalytic activity">
    <reaction evidence="1">
        <text>AMP + ATP = 2 ADP</text>
        <dbReference type="Rhea" id="RHEA:12973"/>
        <dbReference type="ChEBI" id="CHEBI:30616"/>
        <dbReference type="ChEBI" id="CHEBI:456215"/>
        <dbReference type="ChEBI" id="CHEBI:456216"/>
        <dbReference type="EC" id="2.7.4.3"/>
    </reaction>
</comment>
<comment type="pathway">
    <text evidence="1">Purine metabolism; AMP biosynthesis via salvage pathway; AMP from ADP: step 1/1.</text>
</comment>
<comment type="subunit">
    <text evidence="1">Monomer.</text>
</comment>
<comment type="subcellular location">
    <subcellularLocation>
        <location evidence="1">Cytoplasm</location>
    </subcellularLocation>
</comment>
<comment type="domain">
    <text evidence="1">Consists of three domains, a large central CORE domain and two small peripheral domains, NMPbind and LID, which undergo movements during catalysis. The LID domain closes over the site of phosphoryl transfer upon ATP binding. Assembling and dissambling the active center during each catalytic cycle provides an effective means to prevent ATP hydrolysis.</text>
</comment>
<comment type="similarity">
    <text evidence="1">Belongs to the adenylate kinase family.</text>
</comment>
<proteinExistence type="inferred from homology"/>
<name>KAD_STRPI</name>
<organism>
    <name type="scientific">Streptococcus pneumoniae (strain Hungary19A-6)</name>
    <dbReference type="NCBI Taxonomy" id="487214"/>
    <lineage>
        <taxon>Bacteria</taxon>
        <taxon>Bacillati</taxon>
        <taxon>Bacillota</taxon>
        <taxon>Bacilli</taxon>
        <taxon>Lactobacillales</taxon>
        <taxon>Streptococcaceae</taxon>
        <taxon>Streptococcus</taxon>
    </lineage>
</organism>
<dbReference type="EC" id="2.7.4.3" evidence="1"/>
<dbReference type="EMBL" id="CP000936">
    <property type="protein sequence ID" value="ACA37276.1"/>
    <property type="molecule type" value="Genomic_DNA"/>
</dbReference>
<dbReference type="RefSeq" id="WP_001050431.1">
    <property type="nucleotide sequence ID" value="NC_010380.1"/>
</dbReference>
<dbReference type="SMR" id="B1I8L9"/>
<dbReference type="KEGG" id="spv:SPH_0344"/>
<dbReference type="HOGENOM" id="CLU_032354_1_2_9"/>
<dbReference type="UniPathway" id="UPA00588">
    <property type="reaction ID" value="UER00649"/>
</dbReference>
<dbReference type="Proteomes" id="UP000002163">
    <property type="component" value="Chromosome"/>
</dbReference>
<dbReference type="GO" id="GO:0005737">
    <property type="term" value="C:cytoplasm"/>
    <property type="evidence" value="ECO:0007669"/>
    <property type="project" value="UniProtKB-SubCell"/>
</dbReference>
<dbReference type="GO" id="GO:0004017">
    <property type="term" value="F:adenylate kinase activity"/>
    <property type="evidence" value="ECO:0007669"/>
    <property type="project" value="UniProtKB-UniRule"/>
</dbReference>
<dbReference type="GO" id="GO:0005524">
    <property type="term" value="F:ATP binding"/>
    <property type="evidence" value="ECO:0007669"/>
    <property type="project" value="UniProtKB-UniRule"/>
</dbReference>
<dbReference type="GO" id="GO:0044209">
    <property type="term" value="P:AMP salvage"/>
    <property type="evidence" value="ECO:0007669"/>
    <property type="project" value="UniProtKB-UniRule"/>
</dbReference>
<dbReference type="CDD" id="cd01428">
    <property type="entry name" value="ADK"/>
    <property type="match status" value="1"/>
</dbReference>
<dbReference type="FunFam" id="3.40.50.300:FF:000106">
    <property type="entry name" value="Adenylate kinase mitochondrial"/>
    <property type="match status" value="1"/>
</dbReference>
<dbReference type="Gene3D" id="3.40.50.300">
    <property type="entry name" value="P-loop containing nucleotide triphosphate hydrolases"/>
    <property type="match status" value="1"/>
</dbReference>
<dbReference type="HAMAP" id="MF_00235">
    <property type="entry name" value="Adenylate_kinase_Adk"/>
    <property type="match status" value="1"/>
</dbReference>
<dbReference type="InterPro" id="IPR006259">
    <property type="entry name" value="Adenyl_kin_sub"/>
</dbReference>
<dbReference type="InterPro" id="IPR000850">
    <property type="entry name" value="Adenylat/UMP-CMP_kin"/>
</dbReference>
<dbReference type="InterPro" id="IPR033690">
    <property type="entry name" value="Adenylat_kinase_CS"/>
</dbReference>
<dbReference type="InterPro" id="IPR027417">
    <property type="entry name" value="P-loop_NTPase"/>
</dbReference>
<dbReference type="NCBIfam" id="TIGR01351">
    <property type="entry name" value="adk"/>
    <property type="match status" value="1"/>
</dbReference>
<dbReference type="NCBIfam" id="NF001380">
    <property type="entry name" value="PRK00279.1-2"/>
    <property type="match status" value="1"/>
</dbReference>
<dbReference type="NCBIfam" id="NF001381">
    <property type="entry name" value="PRK00279.1-3"/>
    <property type="match status" value="1"/>
</dbReference>
<dbReference type="NCBIfam" id="NF001382">
    <property type="entry name" value="PRK00279.1-4"/>
    <property type="match status" value="1"/>
</dbReference>
<dbReference type="NCBIfam" id="NF011100">
    <property type="entry name" value="PRK14527.1"/>
    <property type="match status" value="1"/>
</dbReference>
<dbReference type="PANTHER" id="PTHR23359">
    <property type="entry name" value="NUCLEOTIDE KINASE"/>
    <property type="match status" value="1"/>
</dbReference>
<dbReference type="Pfam" id="PF00406">
    <property type="entry name" value="ADK"/>
    <property type="match status" value="1"/>
</dbReference>
<dbReference type="PRINTS" id="PR00094">
    <property type="entry name" value="ADENYLTKNASE"/>
</dbReference>
<dbReference type="SUPFAM" id="SSF52540">
    <property type="entry name" value="P-loop containing nucleoside triphosphate hydrolases"/>
    <property type="match status" value="1"/>
</dbReference>
<dbReference type="PROSITE" id="PS00113">
    <property type="entry name" value="ADENYLATE_KINASE"/>
    <property type="match status" value="1"/>
</dbReference>
<reference key="1">
    <citation type="journal article" date="2010" name="Genome Biol.">
        <title>Structure and dynamics of the pan-genome of Streptococcus pneumoniae and closely related species.</title>
        <authorList>
            <person name="Donati C."/>
            <person name="Hiller N.L."/>
            <person name="Tettelin H."/>
            <person name="Muzzi A."/>
            <person name="Croucher N.J."/>
            <person name="Angiuoli S.V."/>
            <person name="Oggioni M."/>
            <person name="Dunning Hotopp J.C."/>
            <person name="Hu F.Z."/>
            <person name="Riley D.R."/>
            <person name="Covacci A."/>
            <person name="Mitchell T.J."/>
            <person name="Bentley S.D."/>
            <person name="Kilian M."/>
            <person name="Ehrlich G.D."/>
            <person name="Rappuoli R."/>
            <person name="Moxon E.R."/>
            <person name="Masignani V."/>
        </authorList>
    </citation>
    <scope>NUCLEOTIDE SEQUENCE [LARGE SCALE GENOMIC DNA]</scope>
    <source>
        <strain>Hungary19A-6</strain>
    </source>
</reference>
<sequence>MNLLIMGLPGAGKGTQAAKIVEQFHVAHISTGDMFRAAMANQTEMGVLAKSYIDKGELVPDEVTNGIVKERLSQDDIKETGFLLDGYPRTIEQAHALDKTLAELGIELEGIINIEVNPDSLLERLSGRIIHRVTGETFHKVFNPPVDYKEEDYYQREDDKPETVKRRLDVNIAQGEPIIAHYRAKGLVHDIEGNQDINDVFSDIEKVLTNLK</sequence>